<evidence type="ECO:0000255" key="1">
    <source>
        <dbReference type="HAMAP-Rule" id="MF_01847"/>
    </source>
</evidence>
<sequence length="272" mass="30209">MARLAAFDMDGTLLMPDHRLGDKTLSTLKRLHDRDITLTFATGRHVLEMRHLLGALSLDAFLITGNGTRIHSVEGEVLHRQDLDPDVADLVLHSTWETEASIHVFNDTGWLTGKEIPELLHAHVYSGFRYQLTDLRRIPAHSVTKICFCGDHDDLCRLRIQLNDALGNRAHLTFSAMDCLEVLPVGCNKGSALAVLSDHLGLTLQDCMAFGDAMNDREMLGSVGRGLIMGNAMPQLIAELSHLPVIGHCRNEAVSHFLTHWLDQPNLPYSPE</sequence>
<keyword id="KW-0378">Hydrolase</keyword>
<keyword id="KW-0460">Magnesium</keyword>
<keyword id="KW-0479">Metal-binding</keyword>
<organism>
    <name type="scientific">Enterobacter sp. (strain 638)</name>
    <dbReference type="NCBI Taxonomy" id="399742"/>
    <lineage>
        <taxon>Bacteria</taxon>
        <taxon>Pseudomonadati</taxon>
        <taxon>Pseudomonadota</taxon>
        <taxon>Gammaproteobacteria</taxon>
        <taxon>Enterobacterales</taxon>
        <taxon>Enterobacteriaceae</taxon>
        <taxon>Enterobacter</taxon>
    </lineage>
</organism>
<feature type="chain" id="PRO_0000342976" description="HMP-PP phosphatase">
    <location>
        <begin position="1"/>
        <end position="272"/>
    </location>
</feature>
<feature type="active site" description="Nucleophile" evidence="1">
    <location>
        <position position="8"/>
    </location>
</feature>
<feature type="binding site" evidence="1">
    <location>
        <position position="8"/>
    </location>
    <ligand>
        <name>Mg(2+)</name>
        <dbReference type="ChEBI" id="CHEBI:18420"/>
    </ligand>
</feature>
<feature type="binding site" evidence="1">
    <location>
        <position position="10"/>
    </location>
    <ligand>
        <name>Mg(2+)</name>
        <dbReference type="ChEBI" id="CHEBI:18420"/>
    </ligand>
</feature>
<feature type="binding site" evidence="1">
    <location>
        <position position="212"/>
    </location>
    <ligand>
        <name>Mg(2+)</name>
        <dbReference type="ChEBI" id="CHEBI:18420"/>
    </ligand>
</feature>
<protein>
    <recommendedName>
        <fullName evidence="1">HMP-PP phosphatase</fullName>
        <ecNumber evidence="1">3.6.1.-</ecNumber>
    </recommendedName>
</protein>
<name>COF_ENT38</name>
<gene>
    <name evidence="1" type="primary">cof</name>
    <name type="ordered locus">Ent638_0913</name>
</gene>
<reference key="1">
    <citation type="journal article" date="2010" name="PLoS Genet.">
        <title>Genome sequence of the plant growth promoting endophytic bacterium Enterobacter sp. 638.</title>
        <authorList>
            <person name="Taghavi S."/>
            <person name="van der Lelie D."/>
            <person name="Hoffman A."/>
            <person name="Zhang Y.B."/>
            <person name="Walla M.D."/>
            <person name="Vangronsveld J."/>
            <person name="Newman L."/>
            <person name="Monchy S."/>
        </authorList>
    </citation>
    <scope>NUCLEOTIDE SEQUENCE [LARGE SCALE GENOMIC DNA]</scope>
    <source>
        <strain>638</strain>
    </source>
</reference>
<accession>A4W7B7</accession>
<comment type="function">
    <text evidence="1">Catalyzes the hydrolysis of 4-amino-2-methyl-5-hydroxymethylpyrimidine pyrophosphate (HMP-PP) to 4-amino-2-methyl-5-hydroxymethylpyrimidine phosphate (HMP-P).</text>
</comment>
<comment type="catalytic activity">
    <reaction evidence="1">
        <text>4-amino-2-methyl-5-(diphosphooxymethyl)pyrimidine + H2O = 4-amino-2-methyl-5-(phosphooxymethyl)pyrimidine + phosphate + H(+)</text>
        <dbReference type="Rhea" id="RHEA:27914"/>
        <dbReference type="ChEBI" id="CHEBI:15377"/>
        <dbReference type="ChEBI" id="CHEBI:15378"/>
        <dbReference type="ChEBI" id="CHEBI:43474"/>
        <dbReference type="ChEBI" id="CHEBI:57841"/>
        <dbReference type="ChEBI" id="CHEBI:58354"/>
    </reaction>
</comment>
<comment type="cofactor">
    <cofactor evidence="1">
        <name>Mg(2+)</name>
        <dbReference type="ChEBI" id="CHEBI:18420"/>
    </cofactor>
</comment>
<comment type="similarity">
    <text evidence="1">Belongs to the HAD-like hydrolase superfamily. Cof family.</text>
</comment>
<proteinExistence type="inferred from homology"/>
<dbReference type="EC" id="3.6.1.-" evidence="1"/>
<dbReference type="EMBL" id="CP000653">
    <property type="protein sequence ID" value="ABP59597.1"/>
    <property type="molecule type" value="Genomic_DNA"/>
</dbReference>
<dbReference type="RefSeq" id="WP_012016318.1">
    <property type="nucleotide sequence ID" value="NC_009436.1"/>
</dbReference>
<dbReference type="SMR" id="A4W7B7"/>
<dbReference type="STRING" id="399742.Ent638_0913"/>
<dbReference type="KEGG" id="ent:Ent638_0913"/>
<dbReference type="eggNOG" id="COG0561">
    <property type="taxonomic scope" value="Bacteria"/>
</dbReference>
<dbReference type="HOGENOM" id="CLU_044146_5_2_6"/>
<dbReference type="OrthoDB" id="5498330at2"/>
<dbReference type="Proteomes" id="UP000000230">
    <property type="component" value="Chromosome"/>
</dbReference>
<dbReference type="GO" id="GO:0002145">
    <property type="term" value="F:4-amino-5-hydroxymethyl-2-methylpyrimidine diphosphatase activity"/>
    <property type="evidence" value="ECO:0007669"/>
    <property type="project" value="RHEA"/>
</dbReference>
<dbReference type="GO" id="GO:0000287">
    <property type="term" value="F:magnesium ion binding"/>
    <property type="evidence" value="ECO:0000250"/>
    <property type="project" value="UniProtKB"/>
</dbReference>
<dbReference type="GO" id="GO:0016791">
    <property type="term" value="F:phosphatase activity"/>
    <property type="evidence" value="ECO:0000250"/>
    <property type="project" value="UniProtKB"/>
</dbReference>
<dbReference type="CDD" id="cd07516">
    <property type="entry name" value="HAD_Pase"/>
    <property type="match status" value="1"/>
</dbReference>
<dbReference type="FunFam" id="3.30.1240.10:FF:000002">
    <property type="entry name" value="HMP-PP phosphatase"/>
    <property type="match status" value="1"/>
</dbReference>
<dbReference type="Gene3D" id="3.30.1240.10">
    <property type="match status" value="1"/>
</dbReference>
<dbReference type="Gene3D" id="3.40.50.1000">
    <property type="entry name" value="HAD superfamily/HAD-like"/>
    <property type="match status" value="1"/>
</dbReference>
<dbReference type="HAMAP" id="MF_01847">
    <property type="entry name" value="HMP_PP_phosphat"/>
    <property type="match status" value="1"/>
</dbReference>
<dbReference type="InterPro" id="IPR000150">
    <property type="entry name" value="Cof"/>
</dbReference>
<dbReference type="InterPro" id="IPR036412">
    <property type="entry name" value="HAD-like_sf"/>
</dbReference>
<dbReference type="InterPro" id="IPR006379">
    <property type="entry name" value="HAD-SF_hydro_IIB"/>
</dbReference>
<dbReference type="InterPro" id="IPR023214">
    <property type="entry name" value="HAD_sf"/>
</dbReference>
<dbReference type="InterPro" id="IPR023938">
    <property type="entry name" value="HMP-PP_phosphatase"/>
</dbReference>
<dbReference type="NCBIfam" id="TIGR00099">
    <property type="entry name" value="Cof-subfamily"/>
    <property type="match status" value="1"/>
</dbReference>
<dbReference type="NCBIfam" id="TIGR01484">
    <property type="entry name" value="HAD-SF-IIB"/>
    <property type="match status" value="1"/>
</dbReference>
<dbReference type="NCBIfam" id="NF011705">
    <property type="entry name" value="PRK15126.1"/>
    <property type="match status" value="1"/>
</dbReference>
<dbReference type="PANTHER" id="PTHR47267">
    <property type="match status" value="1"/>
</dbReference>
<dbReference type="PANTHER" id="PTHR47267:SF2">
    <property type="entry name" value="HMP-PP PHOSPHATASE"/>
    <property type="match status" value="1"/>
</dbReference>
<dbReference type="Pfam" id="PF08282">
    <property type="entry name" value="Hydrolase_3"/>
    <property type="match status" value="1"/>
</dbReference>
<dbReference type="SFLD" id="SFLDG01140">
    <property type="entry name" value="C2.B:_Phosphomannomutase_and_P"/>
    <property type="match status" value="1"/>
</dbReference>
<dbReference type="SFLD" id="SFLDS00003">
    <property type="entry name" value="Haloacid_Dehalogenase"/>
    <property type="match status" value="1"/>
</dbReference>
<dbReference type="SUPFAM" id="SSF56784">
    <property type="entry name" value="HAD-like"/>
    <property type="match status" value="1"/>
</dbReference>
<dbReference type="PROSITE" id="PS01228">
    <property type="entry name" value="COF_1"/>
    <property type="match status" value="1"/>
</dbReference>
<dbReference type="PROSITE" id="PS01229">
    <property type="entry name" value="COF_2"/>
    <property type="match status" value="1"/>
</dbReference>